<reference key="1">
    <citation type="journal article" date="2006" name="BMC Genomics">
        <title>Comparative genome analysis: selection pressure on the Borrelia vls cassettes is essential for infectivity.</title>
        <authorList>
            <person name="Gloeckner G."/>
            <person name="Schulte-Spechtel U."/>
            <person name="Schilhabel M."/>
            <person name="Felder M."/>
            <person name="Suehnel J."/>
            <person name="Wilske B."/>
            <person name="Platzer M."/>
        </authorList>
    </citation>
    <scope>NUCLEOTIDE SEQUENCE [LARGE SCALE GENOMIC DNA]</scope>
    <source>
        <strain>PKo</strain>
    </source>
</reference>
<reference key="2">
    <citation type="journal article" date="2011" name="J. Bacteriol.">
        <title>Whole-genome sequences of two Borrelia afzelii and two Borrelia garinii Lyme disease agent isolates.</title>
        <authorList>
            <person name="Casjens S.R."/>
            <person name="Mongodin E.F."/>
            <person name="Qiu W.G."/>
            <person name="Dunn J.J."/>
            <person name="Luft B.J."/>
            <person name="Fraser-Liggett C.M."/>
            <person name="Schutzer S.E."/>
        </authorList>
    </citation>
    <scope>NUCLEOTIDE SEQUENCE [LARGE SCALE GENOMIC DNA]</scope>
    <source>
        <strain>PKo</strain>
    </source>
</reference>
<comment type="function">
    <text evidence="1">Catalyzes the formation of methylglyoxal from dihydroxyacetone phosphate.</text>
</comment>
<comment type="catalytic activity">
    <reaction evidence="1">
        <text>dihydroxyacetone phosphate = methylglyoxal + phosphate</text>
        <dbReference type="Rhea" id="RHEA:17937"/>
        <dbReference type="ChEBI" id="CHEBI:17158"/>
        <dbReference type="ChEBI" id="CHEBI:43474"/>
        <dbReference type="ChEBI" id="CHEBI:57642"/>
        <dbReference type="EC" id="4.2.3.3"/>
    </reaction>
</comment>
<comment type="similarity">
    <text evidence="1">Belongs to the methylglyoxal synthase family.</text>
</comment>
<sequence>MEKKIALIAHDKKKDDLVNFVKQNHLFLSKFKLIATGTTGSRIQQATDLTVVKYKSGPMGGDQQIGAEVAEGNVLAIFFFRDPLTSQPHEPDVSALIRLCDVHKIPLATNVKTAEILIKGLESLILR</sequence>
<organism>
    <name type="scientific">Borreliella afzelii (strain PKo)</name>
    <name type="common">Borrelia afzelii</name>
    <dbReference type="NCBI Taxonomy" id="390236"/>
    <lineage>
        <taxon>Bacteria</taxon>
        <taxon>Pseudomonadati</taxon>
        <taxon>Spirochaetota</taxon>
        <taxon>Spirochaetia</taxon>
        <taxon>Spirochaetales</taxon>
        <taxon>Borreliaceae</taxon>
        <taxon>Borreliella</taxon>
    </lineage>
</organism>
<dbReference type="EC" id="4.2.3.3" evidence="1"/>
<dbReference type="EMBL" id="CP000395">
    <property type="protein sequence ID" value="ABH01628.1"/>
    <property type="molecule type" value="Genomic_DNA"/>
</dbReference>
<dbReference type="EMBL" id="CP002933">
    <property type="protein sequence ID" value="AEL69589.1"/>
    <property type="molecule type" value="Genomic_DNA"/>
</dbReference>
<dbReference type="RefSeq" id="WP_011600979.1">
    <property type="nucleotide sequence ID" value="NZ_CP160066.1"/>
</dbReference>
<dbReference type="SMR" id="Q0SNF0"/>
<dbReference type="STRING" id="29518.BLA32_02495"/>
<dbReference type="GeneID" id="77265199"/>
<dbReference type="KEGG" id="baf:BAPKO_0372"/>
<dbReference type="KEGG" id="bafz:BafPKo_0363"/>
<dbReference type="PATRIC" id="fig|390236.22.peg.356"/>
<dbReference type="eggNOG" id="COG1803">
    <property type="taxonomic scope" value="Bacteria"/>
</dbReference>
<dbReference type="HOGENOM" id="CLU_120420_1_0_12"/>
<dbReference type="OrthoDB" id="9787147at2"/>
<dbReference type="Proteomes" id="UP000005216">
    <property type="component" value="Chromosome"/>
</dbReference>
<dbReference type="GO" id="GO:0005829">
    <property type="term" value="C:cytosol"/>
    <property type="evidence" value="ECO:0007669"/>
    <property type="project" value="TreeGrafter"/>
</dbReference>
<dbReference type="GO" id="GO:0008929">
    <property type="term" value="F:methylglyoxal synthase activity"/>
    <property type="evidence" value="ECO:0007669"/>
    <property type="project" value="UniProtKB-UniRule"/>
</dbReference>
<dbReference type="GO" id="GO:0019242">
    <property type="term" value="P:methylglyoxal biosynthetic process"/>
    <property type="evidence" value="ECO:0007669"/>
    <property type="project" value="UniProtKB-UniRule"/>
</dbReference>
<dbReference type="CDD" id="cd01422">
    <property type="entry name" value="MGS"/>
    <property type="match status" value="1"/>
</dbReference>
<dbReference type="Gene3D" id="3.40.50.1380">
    <property type="entry name" value="Methylglyoxal synthase-like domain"/>
    <property type="match status" value="1"/>
</dbReference>
<dbReference type="HAMAP" id="MF_00549">
    <property type="entry name" value="Methylglyoxal_synth"/>
    <property type="match status" value="1"/>
</dbReference>
<dbReference type="InterPro" id="IPR004363">
    <property type="entry name" value="Methylgl_synth"/>
</dbReference>
<dbReference type="InterPro" id="IPR018148">
    <property type="entry name" value="Methylglyoxal_synth_AS"/>
</dbReference>
<dbReference type="InterPro" id="IPR011607">
    <property type="entry name" value="MGS-like_dom"/>
</dbReference>
<dbReference type="InterPro" id="IPR036914">
    <property type="entry name" value="MGS-like_dom_sf"/>
</dbReference>
<dbReference type="NCBIfam" id="TIGR00160">
    <property type="entry name" value="MGSA"/>
    <property type="match status" value="1"/>
</dbReference>
<dbReference type="NCBIfam" id="NF003559">
    <property type="entry name" value="PRK05234.1"/>
    <property type="match status" value="1"/>
</dbReference>
<dbReference type="PANTHER" id="PTHR30492">
    <property type="entry name" value="METHYLGLYOXAL SYNTHASE"/>
    <property type="match status" value="1"/>
</dbReference>
<dbReference type="PANTHER" id="PTHR30492:SF0">
    <property type="entry name" value="METHYLGLYOXAL SYNTHASE"/>
    <property type="match status" value="1"/>
</dbReference>
<dbReference type="Pfam" id="PF02142">
    <property type="entry name" value="MGS"/>
    <property type="match status" value="1"/>
</dbReference>
<dbReference type="PIRSF" id="PIRSF006614">
    <property type="entry name" value="Methylglyox_syn"/>
    <property type="match status" value="1"/>
</dbReference>
<dbReference type="SMART" id="SM00851">
    <property type="entry name" value="MGS"/>
    <property type="match status" value="1"/>
</dbReference>
<dbReference type="SUPFAM" id="SSF52335">
    <property type="entry name" value="Methylglyoxal synthase-like"/>
    <property type="match status" value="1"/>
</dbReference>
<dbReference type="PROSITE" id="PS01335">
    <property type="entry name" value="METHYLGLYOXAL_SYNTH"/>
    <property type="match status" value="1"/>
</dbReference>
<dbReference type="PROSITE" id="PS51855">
    <property type="entry name" value="MGS"/>
    <property type="match status" value="1"/>
</dbReference>
<keyword id="KW-0456">Lyase</keyword>
<evidence type="ECO:0000255" key="1">
    <source>
        <dbReference type="HAMAP-Rule" id="MF_00549"/>
    </source>
</evidence>
<accession>Q0SNF0</accession>
<accession>G0IS08</accession>
<gene>
    <name evidence="1" type="primary">mgsA</name>
    <name type="ordered locus">BAPKO_0372</name>
    <name type="ordered locus">BafPKo_0363</name>
</gene>
<name>MGSA_BORAP</name>
<protein>
    <recommendedName>
        <fullName evidence="1">Methylglyoxal synthase</fullName>
        <shortName evidence="1">MGS</shortName>
        <ecNumber evidence="1">4.2.3.3</ecNumber>
    </recommendedName>
</protein>
<feature type="chain" id="PRO_1000017786" description="Methylglyoxal synthase">
    <location>
        <begin position="1"/>
        <end position="127"/>
    </location>
</feature>
<feature type="domain" description="MGS-like" evidence="1">
    <location>
        <begin position="1"/>
        <end position="127"/>
    </location>
</feature>
<feature type="active site" description="Proton donor/acceptor" evidence="1">
    <location>
        <position position="62"/>
    </location>
</feature>
<feature type="binding site" evidence="1">
    <location>
        <position position="10"/>
    </location>
    <ligand>
        <name>substrate</name>
    </ligand>
</feature>
<feature type="binding site" evidence="1">
    <location>
        <position position="14"/>
    </location>
    <ligand>
        <name>substrate</name>
    </ligand>
</feature>
<feature type="binding site" evidence="1">
    <location>
        <begin position="36"/>
        <end position="39"/>
    </location>
    <ligand>
        <name>substrate</name>
    </ligand>
</feature>
<feature type="binding site" evidence="1">
    <location>
        <begin position="56"/>
        <end position="57"/>
    </location>
    <ligand>
        <name>substrate</name>
    </ligand>
</feature>
<feature type="binding site" evidence="1">
    <location>
        <position position="89"/>
    </location>
    <ligand>
        <name>substrate</name>
    </ligand>
</feature>
<proteinExistence type="inferred from homology"/>